<protein>
    <recommendedName>
        <fullName evidence="1">Uracil phosphoribosyltransferase</fullName>
        <ecNumber evidence="1">2.4.2.9</ecNumber>
    </recommendedName>
    <alternativeName>
        <fullName evidence="1">UMP pyrophosphorylase</fullName>
    </alternativeName>
    <alternativeName>
        <fullName evidence="1">UPRTase</fullName>
    </alternativeName>
</protein>
<sequence>MAKVHILDHPLIQHKLSLIRDENTGSKDFRELVEEVSMLMAYEVTRDFPLQDVEVKTPVATMTAKAIAGRKVGLIPILRAGLGMVDGMLRLIPTAKVGHVGLYRDPETLKPVEYYCKLPTDVEERDLIVIDPMLATGGSATAAITFLKDRGAKSIKLMCLIAAPEGIKEVQNYHDDVDIFVAAVDDYLNDHGYIIPGLGDAGDRLFGTK</sequence>
<proteinExistence type="inferred from homology"/>
<keyword id="KW-0021">Allosteric enzyme</keyword>
<keyword id="KW-0328">Glycosyltransferase</keyword>
<keyword id="KW-0342">GTP-binding</keyword>
<keyword id="KW-0460">Magnesium</keyword>
<keyword id="KW-0547">Nucleotide-binding</keyword>
<keyword id="KW-0808">Transferase</keyword>
<dbReference type="EC" id="2.4.2.9" evidence="1"/>
<dbReference type="EMBL" id="CP001336">
    <property type="protein sequence ID" value="ACL22820.1"/>
    <property type="molecule type" value="Genomic_DNA"/>
</dbReference>
<dbReference type="RefSeq" id="WP_005815407.1">
    <property type="nucleotide sequence ID" value="NC_011830.1"/>
</dbReference>
<dbReference type="SMR" id="B8FZ68"/>
<dbReference type="KEGG" id="dhd:Dhaf_4825"/>
<dbReference type="HOGENOM" id="CLU_067096_2_2_9"/>
<dbReference type="UniPathway" id="UPA00574">
    <property type="reaction ID" value="UER00636"/>
</dbReference>
<dbReference type="Proteomes" id="UP000007726">
    <property type="component" value="Chromosome"/>
</dbReference>
<dbReference type="GO" id="GO:0005525">
    <property type="term" value="F:GTP binding"/>
    <property type="evidence" value="ECO:0007669"/>
    <property type="project" value="UniProtKB-KW"/>
</dbReference>
<dbReference type="GO" id="GO:0000287">
    <property type="term" value="F:magnesium ion binding"/>
    <property type="evidence" value="ECO:0007669"/>
    <property type="project" value="UniProtKB-UniRule"/>
</dbReference>
<dbReference type="GO" id="GO:0004845">
    <property type="term" value="F:uracil phosphoribosyltransferase activity"/>
    <property type="evidence" value="ECO:0007669"/>
    <property type="project" value="UniProtKB-UniRule"/>
</dbReference>
<dbReference type="GO" id="GO:0044206">
    <property type="term" value="P:UMP salvage"/>
    <property type="evidence" value="ECO:0007669"/>
    <property type="project" value="UniProtKB-UniRule"/>
</dbReference>
<dbReference type="GO" id="GO:0006223">
    <property type="term" value="P:uracil salvage"/>
    <property type="evidence" value="ECO:0007669"/>
    <property type="project" value="InterPro"/>
</dbReference>
<dbReference type="CDD" id="cd06223">
    <property type="entry name" value="PRTases_typeI"/>
    <property type="match status" value="1"/>
</dbReference>
<dbReference type="FunFam" id="3.40.50.2020:FF:000003">
    <property type="entry name" value="Uracil phosphoribosyltransferase"/>
    <property type="match status" value="1"/>
</dbReference>
<dbReference type="Gene3D" id="3.40.50.2020">
    <property type="match status" value="1"/>
</dbReference>
<dbReference type="HAMAP" id="MF_01218_B">
    <property type="entry name" value="Upp_B"/>
    <property type="match status" value="1"/>
</dbReference>
<dbReference type="InterPro" id="IPR000836">
    <property type="entry name" value="PRibTrfase_dom"/>
</dbReference>
<dbReference type="InterPro" id="IPR029057">
    <property type="entry name" value="PRTase-like"/>
</dbReference>
<dbReference type="InterPro" id="IPR034332">
    <property type="entry name" value="Upp_B"/>
</dbReference>
<dbReference type="InterPro" id="IPR050054">
    <property type="entry name" value="UPRTase/APRTase"/>
</dbReference>
<dbReference type="InterPro" id="IPR005765">
    <property type="entry name" value="Ura_phspho_trans"/>
</dbReference>
<dbReference type="NCBIfam" id="NF001097">
    <property type="entry name" value="PRK00129.1"/>
    <property type="match status" value="1"/>
</dbReference>
<dbReference type="NCBIfam" id="TIGR01091">
    <property type="entry name" value="upp"/>
    <property type="match status" value="1"/>
</dbReference>
<dbReference type="PANTHER" id="PTHR32315">
    <property type="entry name" value="ADENINE PHOSPHORIBOSYLTRANSFERASE"/>
    <property type="match status" value="1"/>
</dbReference>
<dbReference type="PANTHER" id="PTHR32315:SF4">
    <property type="entry name" value="URACIL PHOSPHORIBOSYLTRANSFERASE, CHLOROPLASTIC"/>
    <property type="match status" value="1"/>
</dbReference>
<dbReference type="Pfam" id="PF14681">
    <property type="entry name" value="UPRTase"/>
    <property type="match status" value="1"/>
</dbReference>
<dbReference type="SUPFAM" id="SSF53271">
    <property type="entry name" value="PRTase-like"/>
    <property type="match status" value="1"/>
</dbReference>
<reference key="1">
    <citation type="journal article" date="2012" name="BMC Microbiol.">
        <title>Genome sequence of Desulfitobacterium hafniense DCB-2, a Gram-positive anaerobe capable of dehalogenation and metal reduction.</title>
        <authorList>
            <person name="Kim S.H."/>
            <person name="Harzman C."/>
            <person name="Davis J.K."/>
            <person name="Hutcheson R."/>
            <person name="Broderick J.B."/>
            <person name="Marsh T.L."/>
            <person name="Tiedje J.M."/>
        </authorList>
    </citation>
    <scope>NUCLEOTIDE SEQUENCE [LARGE SCALE GENOMIC DNA]</scope>
    <source>
        <strain>DSM 10664 / DCB-2</strain>
    </source>
</reference>
<name>UPP_DESHD</name>
<feature type="chain" id="PRO_1000164821" description="Uracil phosphoribosyltransferase">
    <location>
        <begin position="1"/>
        <end position="209"/>
    </location>
</feature>
<feature type="binding site" evidence="1">
    <location>
        <position position="79"/>
    </location>
    <ligand>
        <name>5-phospho-alpha-D-ribose 1-diphosphate</name>
        <dbReference type="ChEBI" id="CHEBI:58017"/>
    </ligand>
</feature>
<feature type="binding site" evidence="1">
    <location>
        <position position="104"/>
    </location>
    <ligand>
        <name>5-phospho-alpha-D-ribose 1-diphosphate</name>
        <dbReference type="ChEBI" id="CHEBI:58017"/>
    </ligand>
</feature>
<feature type="binding site" evidence="1">
    <location>
        <begin position="131"/>
        <end position="139"/>
    </location>
    <ligand>
        <name>5-phospho-alpha-D-ribose 1-diphosphate</name>
        <dbReference type="ChEBI" id="CHEBI:58017"/>
    </ligand>
</feature>
<feature type="binding site" evidence="1">
    <location>
        <position position="194"/>
    </location>
    <ligand>
        <name>uracil</name>
        <dbReference type="ChEBI" id="CHEBI:17568"/>
    </ligand>
</feature>
<feature type="binding site" evidence="1">
    <location>
        <begin position="199"/>
        <end position="201"/>
    </location>
    <ligand>
        <name>uracil</name>
        <dbReference type="ChEBI" id="CHEBI:17568"/>
    </ligand>
</feature>
<feature type="binding site" evidence="1">
    <location>
        <position position="200"/>
    </location>
    <ligand>
        <name>5-phospho-alpha-D-ribose 1-diphosphate</name>
        <dbReference type="ChEBI" id="CHEBI:58017"/>
    </ligand>
</feature>
<comment type="function">
    <text evidence="1">Catalyzes the conversion of uracil and 5-phospho-alpha-D-ribose 1-diphosphate (PRPP) to UMP and diphosphate.</text>
</comment>
<comment type="catalytic activity">
    <reaction evidence="1">
        <text>UMP + diphosphate = 5-phospho-alpha-D-ribose 1-diphosphate + uracil</text>
        <dbReference type="Rhea" id="RHEA:13017"/>
        <dbReference type="ChEBI" id="CHEBI:17568"/>
        <dbReference type="ChEBI" id="CHEBI:33019"/>
        <dbReference type="ChEBI" id="CHEBI:57865"/>
        <dbReference type="ChEBI" id="CHEBI:58017"/>
        <dbReference type="EC" id="2.4.2.9"/>
    </reaction>
</comment>
<comment type="cofactor">
    <cofactor evidence="1">
        <name>Mg(2+)</name>
        <dbReference type="ChEBI" id="CHEBI:18420"/>
    </cofactor>
    <text evidence="1">Binds 1 Mg(2+) ion per subunit. The magnesium is bound as Mg-PRPP.</text>
</comment>
<comment type="activity regulation">
    <text evidence="1">Allosterically activated by GTP.</text>
</comment>
<comment type="pathway">
    <text evidence="1">Pyrimidine metabolism; UMP biosynthesis via salvage pathway; UMP from uracil: step 1/1.</text>
</comment>
<comment type="similarity">
    <text evidence="1">Belongs to the UPRTase family.</text>
</comment>
<accession>B8FZ68</accession>
<evidence type="ECO:0000255" key="1">
    <source>
        <dbReference type="HAMAP-Rule" id="MF_01218"/>
    </source>
</evidence>
<gene>
    <name evidence="1" type="primary">upp</name>
    <name type="ordered locus">Dhaf_4825</name>
</gene>
<organism>
    <name type="scientific">Desulfitobacterium hafniense (strain DSM 10664 / DCB-2)</name>
    <dbReference type="NCBI Taxonomy" id="272564"/>
    <lineage>
        <taxon>Bacteria</taxon>
        <taxon>Bacillati</taxon>
        <taxon>Bacillota</taxon>
        <taxon>Clostridia</taxon>
        <taxon>Eubacteriales</taxon>
        <taxon>Desulfitobacteriaceae</taxon>
        <taxon>Desulfitobacterium</taxon>
    </lineage>
</organism>